<gene>
    <name evidence="1" type="primary">rpl14</name>
    <name type="ordered locus">Hbut_1310</name>
</gene>
<proteinExistence type="inferred from homology"/>
<name>RL14_HYPBU</name>
<organism>
    <name type="scientific">Hyperthermus butylicus (strain DSM 5456 / JCM 9403 / PLM1-5)</name>
    <dbReference type="NCBI Taxonomy" id="415426"/>
    <lineage>
        <taxon>Archaea</taxon>
        <taxon>Thermoproteota</taxon>
        <taxon>Thermoprotei</taxon>
        <taxon>Desulfurococcales</taxon>
        <taxon>Pyrodictiaceae</taxon>
        <taxon>Hyperthermus</taxon>
    </lineage>
</organism>
<dbReference type="EMBL" id="CP000493">
    <property type="protein sequence ID" value="ABM81140.1"/>
    <property type="molecule type" value="Genomic_DNA"/>
</dbReference>
<dbReference type="RefSeq" id="WP_011822458.1">
    <property type="nucleotide sequence ID" value="NC_008818.1"/>
</dbReference>
<dbReference type="SMR" id="A2BMC9"/>
<dbReference type="STRING" id="415426.Hbut_1310"/>
<dbReference type="EnsemblBacteria" id="ABM81140">
    <property type="protein sequence ID" value="ABM81140"/>
    <property type="gene ID" value="Hbut_1310"/>
</dbReference>
<dbReference type="GeneID" id="4782903"/>
<dbReference type="KEGG" id="hbu:Hbut_1310"/>
<dbReference type="eggNOG" id="arCOG04095">
    <property type="taxonomic scope" value="Archaea"/>
</dbReference>
<dbReference type="HOGENOM" id="CLU_095071_3_0_2"/>
<dbReference type="OrthoDB" id="23569at2157"/>
<dbReference type="Proteomes" id="UP000002593">
    <property type="component" value="Chromosome"/>
</dbReference>
<dbReference type="GO" id="GO:0022625">
    <property type="term" value="C:cytosolic large ribosomal subunit"/>
    <property type="evidence" value="ECO:0007669"/>
    <property type="project" value="TreeGrafter"/>
</dbReference>
<dbReference type="GO" id="GO:0070180">
    <property type="term" value="F:large ribosomal subunit rRNA binding"/>
    <property type="evidence" value="ECO:0007669"/>
    <property type="project" value="TreeGrafter"/>
</dbReference>
<dbReference type="GO" id="GO:0003735">
    <property type="term" value="F:structural constituent of ribosome"/>
    <property type="evidence" value="ECO:0007669"/>
    <property type="project" value="InterPro"/>
</dbReference>
<dbReference type="GO" id="GO:0006412">
    <property type="term" value="P:translation"/>
    <property type="evidence" value="ECO:0007669"/>
    <property type="project" value="UniProtKB-UniRule"/>
</dbReference>
<dbReference type="CDD" id="cd00337">
    <property type="entry name" value="Ribosomal_uL14"/>
    <property type="match status" value="1"/>
</dbReference>
<dbReference type="FunFam" id="2.40.150.20:FF:000007">
    <property type="entry name" value="50S ribosomal protein L14"/>
    <property type="match status" value="1"/>
</dbReference>
<dbReference type="Gene3D" id="2.40.150.20">
    <property type="entry name" value="Ribosomal protein L14"/>
    <property type="match status" value="1"/>
</dbReference>
<dbReference type="HAMAP" id="MF_01367">
    <property type="entry name" value="Ribosomal_uL14"/>
    <property type="match status" value="1"/>
</dbReference>
<dbReference type="InterPro" id="IPR000218">
    <property type="entry name" value="Ribosomal_uL14"/>
</dbReference>
<dbReference type="InterPro" id="IPR019971">
    <property type="entry name" value="Ribosomal_uL14_arc"/>
</dbReference>
<dbReference type="InterPro" id="IPR019972">
    <property type="entry name" value="Ribosomal_uL14_CS"/>
</dbReference>
<dbReference type="InterPro" id="IPR036853">
    <property type="entry name" value="Ribosomal_uL14_sf"/>
</dbReference>
<dbReference type="NCBIfam" id="NF006344">
    <property type="entry name" value="PRK08571.1"/>
    <property type="match status" value="1"/>
</dbReference>
<dbReference type="NCBIfam" id="TIGR03673">
    <property type="entry name" value="uL14_arch"/>
    <property type="match status" value="1"/>
</dbReference>
<dbReference type="PANTHER" id="PTHR11761">
    <property type="entry name" value="50S/60S RIBOSOMAL PROTEIN L14/L23"/>
    <property type="match status" value="1"/>
</dbReference>
<dbReference type="PANTHER" id="PTHR11761:SF8">
    <property type="entry name" value="LARGE RIBOSOMAL SUBUNIT PROTEIN UL14"/>
    <property type="match status" value="1"/>
</dbReference>
<dbReference type="Pfam" id="PF00238">
    <property type="entry name" value="Ribosomal_L14"/>
    <property type="match status" value="1"/>
</dbReference>
<dbReference type="SMART" id="SM01374">
    <property type="entry name" value="Ribosomal_L14"/>
    <property type="match status" value="1"/>
</dbReference>
<dbReference type="SUPFAM" id="SSF50193">
    <property type="entry name" value="Ribosomal protein L14"/>
    <property type="match status" value="1"/>
</dbReference>
<dbReference type="PROSITE" id="PS00049">
    <property type="entry name" value="RIBOSOMAL_L14"/>
    <property type="match status" value="1"/>
</dbReference>
<protein>
    <recommendedName>
        <fullName evidence="1">Large ribosomal subunit protein uL14</fullName>
    </recommendedName>
    <alternativeName>
        <fullName evidence="2">50S ribosomal protein L14</fullName>
    </alternativeName>
</protein>
<accession>A2BMC9</accession>
<feature type="chain" id="PRO_1000055597" description="Large ribosomal subunit protein uL14">
    <location>
        <begin position="1"/>
        <end position="138"/>
    </location>
</feature>
<comment type="function">
    <text evidence="1">Binds to 23S rRNA. Forms part of two intersubunit bridges in the 70S ribosome.</text>
</comment>
<comment type="subunit">
    <text evidence="1">Part of the 50S ribosomal subunit. Forms a cluster with proteins L3 and L24e, part of which may contact the 16S rRNA in 2 intersubunit bridges.</text>
</comment>
<comment type="similarity">
    <text evidence="1">Belongs to the universal ribosomal protein uL14 family.</text>
</comment>
<keyword id="KW-1185">Reference proteome</keyword>
<keyword id="KW-0687">Ribonucleoprotein</keyword>
<keyword id="KW-0689">Ribosomal protein</keyword>
<keyword id="KW-0694">RNA-binding</keyword>
<keyword id="KW-0699">rRNA-binding</keyword>
<sequence length="138" mass="14801">MPKGAAGAGPRRHIAAGLQVGSYVKVADNSGAKEAMIIGVIGYKGRLRRIPPAAVGDMVVVTVKKGTPEMRKQVVRAIVIRQRRPYRRPDGTWIAFEDNAVVIVSPDGTPKGSEIRGPVAREAAERWPKVANIASIII</sequence>
<evidence type="ECO:0000255" key="1">
    <source>
        <dbReference type="HAMAP-Rule" id="MF_01367"/>
    </source>
</evidence>
<evidence type="ECO:0000305" key="2"/>
<reference key="1">
    <citation type="journal article" date="2007" name="Archaea">
        <title>The genome of Hyperthermus butylicus: a sulfur-reducing, peptide fermenting, neutrophilic Crenarchaeote growing up to 108 degrees C.</title>
        <authorList>
            <person name="Bruegger K."/>
            <person name="Chen L."/>
            <person name="Stark M."/>
            <person name="Zibat A."/>
            <person name="Redder P."/>
            <person name="Ruepp A."/>
            <person name="Awayez M."/>
            <person name="She Q."/>
            <person name="Garrett R.A."/>
            <person name="Klenk H.-P."/>
        </authorList>
    </citation>
    <scope>NUCLEOTIDE SEQUENCE [LARGE SCALE GENOMIC DNA]</scope>
    <source>
        <strain>DSM 5456 / JCM 9403 / PLM1-5</strain>
    </source>
</reference>